<reference key="1">
    <citation type="journal article" date="2006" name="PLoS Genet.">
        <title>Comparative genomics of emerging human ehrlichiosis agents.</title>
        <authorList>
            <person name="Dunning Hotopp J.C."/>
            <person name="Lin M."/>
            <person name="Madupu R."/>
            <person name="Crabtree J."/>
            <person name="Angiuoli S.V."/>
            <person name="Eisen J.A."/>
            <person name="Seshadri R."/>
            <person name="Ren Q."/>
            <person name="Wu M."/>
            <person name="Utterback T.R."/>
            <person name="Smith S."/>
            <person name="Lewis M."/>
            <person name="Khouri H."/>
            <person name="Zhang C."/>
            <person name="Niu H."/>
            <person name="Lin Q."/>
            <person name="Ohashi N."/>
            <person name="Zhi N."/>
            <person name="Nelson W.C."/>
            <person name="Brinkac L.M."/>
            <person name="Dodson R.J."/>
            <person name="Rosovitz M.J."/>
            <person name="Sundaram J.P."/>
            <person name="Daugherty S.C."/>
            <person name="Davidsen T."/>
            <person name="Durkin A.S."/>
            <person name="Gwinn M.L."/>
            <person name="Haft D.H."/>
            <person name="Selengut J.D."/>
            <person name="Sullivan S.A."/>
            <person name="Zafar N."/>
            <person name="Zhou L."/>
            <person name="Benahmed F."/>
            <person name="Forberger H."/>
            <person name="Halpin R."/>
            <person name="Mulligan S."/>
            <person name="Robinson J."/>
            <person name="White O."/>
            <person name="Rikihisa Y."/>
            <person name="Tettelin H."/>
        </authorList>
    </citation>
    <scope>NUCLEOTIDE SEQUENCE [LARGE SCALE GENOMIC DNA]</scope>
    <source>
        <strain>ATCC CRL-10679 / Arkansas</strain>
    </source>
</reference>
<accession>Q2GG91</accession>
<protein>
    <recommendedName>
        <fullName evidence="1">Holo-[acyl-carrier-protein] synthase</fullName>
        <shortName evidence="1">Holo-ACP synthase</shortName>
        <ecNumber evidence="1">2.7.8.7</ecNumber>
    </recommendedName>
    <alternativeName>
        <fullName evidence="1">4'-phosphopantetheinyl transferase AcpS</fullName>
    </alternativeName>
</protein>
<name>ACPS_EHRCR</name>
<feature type="chain" id="PRO_1000008423" description="Holo-[acyl-carrier-protein] synthase">
    <location>
        <begin position="1"/>
        <end position="123"/>
    </location>
</feature>
<feature type="binding site" evidence="1">
    <location>
        <position position="8"/>
    </location>
    <ligand>
        <name>Mg(2+)</name>
        <dbReference type="ChEBI" id="CHEBI:18420"/>
    </ligand>
</feature>
<feature type="binding site" evidence="1">
    <location>
        <position position="60"/>
    </location>
    <ligand>
        <name>Mg(2+)</name>
        <dbReference type="ChEBI" id="CHEBI:18420"/>
    </ligand>
</feature>
<evidence type="ECO:0000255" key="1">
    <source>
        <dbReference type="HAMAP-Rule" id="MF_00101"/>
    </source>
</evidence>
<dbReference type="EC" id="2.7.8.7" evidence="1"/>
<dbReference type="EMBL" id="CP000236">
    <property type="protein sequence ID" value="ABD45080.1"/>
    <property type="molecule type" value="Genomic_DNA"/>
</dbReference>
<dbReference type="RefSeq" id="WP_011452786.1">
    <property type="nucleotide sequence ID" value="NC_007799.1"/>
</dbReference>
<dbReference type="SMR" id="Q2GG91"/>
<dbReference type="STRING" id="205920.ECH_0741"/>
<dbReference type="KEGG" id="ech:ECH_0741"/>
<dbReference type="eggNOG" id="COG0736">
    <property type="taxonomic scope" value="Bacteria"/>
</dbReference>
<dbReference type="HOGENOM" id="CLU_089696_1_2_5"/>
<dbReference type="OrthoDB" id="517356at2"/>
<dbReference type="Proteomes" id="UP000008320">
    <property type="component" value="Chromosome"/>
</dbReference>
<dbReference type="GO" id="GO:0005829">
    <property type="term" value="C:cytosol"/>
    <property type="evidence" value="ECO:0007669"/>
    <property type="project" value="TreeGrafter"/>
</dbReference>
<dbReference type="GO" id="GO:0008897">
    <property type="term" value="F:holo-[acyl-carrier-protein] synthase activity"/>
    <property type="evidence" value="ECO:0007669"/>
    <property type="project" value="UniProtKB-UniRule"/>
</dbReference>
<dbReference type="GO" id="GO:0000287">
    <property type="term" value="F:magnesium ion binding"/>
    <property type="evidence" value="ECO:0007669"/>
    <property type="project" value="UniProtKB-UniRule"/>
</dbReference>
<dbReference type="GO" id="GO:0006633">
    <property type="term" value="P:fatty acid biosynthetic process"/>
    <property type="evidence" value="ECO:0007669"/>
    <property type="project" value="UniProtKB-UniRule"/>
</dbReference>
<dbReference type="GO" id="GO:0019878">
    <property type="term" value="P:lysine biosynthetic process via aminoadipic acid"/>
    <property type="evidence" value="ECO:0007669"/>
    <property type="project" value="TreeGrafter"/>
</dbReference>
<dbReference type="Gene3D" id="3.90.470.20">
    <property type="entry name" value="4'-phosphopantetheinyl transferase domain"/>
    <property type="match status" value="1"/>
</dbReference>
<dbReference type="HAMAP" id="MF_00101">
    <property type="entry name" value="AcpS"/>
    <property type="match status" value="1"/>
</dbReference>
<dbReference type="InterPro" id="IPR008278">
    <property type="entry name" value="4-PPantetheinyl_Trfase_dom"/>
</dbReference>
<dbReference type="InterPro" id="IPR037143">
    <property type="entry name" value="4-PPantetheinyl_Trfase_dom_sf"/>
</dbReference>
<dbReference type="InterPro" id="IPR002582">
    <property type="entry name" value="ACPS"/>
</dbReference>
<dbReference type="InterPro" id="IPR050559">
    <property type="entry name" value="P-Pant_transferase_sf"/>
</dbReference>
<dbReference type="InterPro" id="IPR004568">
    <property type="entry name" value="Ppantetheine-prot_Trfase_dom"/>
</dbReference>
<dbReference type="NCBIfam" id="TIGR00516">
    <property type="entry name" value="acpS"/>
    <property type="match status" value="1"/>
</dbReference>
<dbReference type="NCBIfam" id="TIGR00556">
    <property type="entry name" value="pantethn_trn"/>
    <property type="match status" value="1"/>
</dbReference>
<dbReference type="NCBIfam" id="NF011253">
    <property type="entry name" value="PRK14659.1"/>
    <property type="match status" value="1"/>
</dbReference>
<dbReference type="PANTHER" id="PTHR12215:SF15">
    <property type="entry name" value="4'-PHOSPHOPANTETHEINYL TRANSFERASE SUPERFAMILY-RELATED"/>
    <property type="match status" value="1"/>
</dbReference>
<dbReference type="PANTHER" id="PTHR12215">
    <property type="entry name" value="PHOSPHOPANTETHEINE TRANSFERASE"/>
    <property type="match status" value="1"/>
</dbReference>
<dbReference type="Pfam" id="PF01648">
    <property type="entry name" value="ACPS"/>
    <property type="match status" value="1"/>
</dbReference>
<dbReference type="SUPFAM" id="SSF56214">
    <property type="entry name" value="4'-phosphopantetheinyl transferase"/>
    <property type="match status" value="1"/>
</dbReference>
<organism>
    <name type="scientific">Ehrlichia chaffeensis (strain ATCC CRL-10679 / Arkansas)</name>
    <dbReference type="NCBI Taxonomy" id="205920"/>
    <lineage>
        <taxon>Bacteria</taxon>
        <taxon>Pseudomonadati</taxon>
        <taxon>Pseudomonadota</taxon>
        <taxon>Alphaproteobacteria</taxon>
        <taxon>Rickettsiales</taxon>
        <taxon>Anaplasmataceae</taxon>
        <taxon>Ehrlichia</taxon>
    </lineage>
</organism>
<keyword id="KW-0963">Cytoplasm</keyword>
<keyword id="KW-0275">Fatty acid biosynthesis</keyword>
<keyword id="KW-0276">Fatty acid metabolism</keyword>
<keyword id="KW-0444">Lipid biosynthesis</keyword>
<keyword id="KW-0443">Lipid metabolism</keyword>
<keyword id="KW-0460">Magnesium</keyword>
<keyword id="KW-0479">Metal-binding</keyword>
<keyword id="KW-1185">Reference proteome</keyword>
<keyword id="KW-0808">Transferase</keyword>
<sequence length="123" mass="14053">MILGIGTDIVYVPRISNLWKKFGTKFLKRVFSEKEIEDSKKYTNFDAQVRHFAKRFAAKEAYVKAVGTGFGKSIKMPDIIVSNNLHGKPQITINNSNIKYKIELSISDEKDYAIAFVVLYTEL</sequence>
<proteinExistence type="inferred from homology"/>
<comment type="function">
    <text evidence="1">Transfers the 4'-phosphopantetheine moiety from coenzyme A to a Ser of acyl-carrier-protein.</text>
</comment>
<comment type="catalytic activity">
    <reaction evidence="1">
        <text>apo-[ACP] + CoA = holo-[ACP] + adenosine 3',5'-bisphosphate + H(+)</text>
        <dbReference type="Rhea" id="RHEA:12068"/>
        <dbReference type="Rhea" id="RHEA-COMP:9685"/>
        <dbReference type="Rhea" id="RHEA-COMP:9690"/>
        <dbReference type="ChEBI" id="CHEBI:15378"/>
        <dbReference type="ChEBI" id="CHEBI:29999"/>
        <dbReference type="ChEBI" id="CHEBI:57287"/>
        <dbReference type="ChEBI" id="CHEBI:58343"/>
        <dbReference type="ChEBI" id="CHEBI:64479"/>
        <dbReference type="EC" id="2.7.8.7"/>
    </reaction>
</comment>
<comment type="cofactor">
    <cofactor evidence="1">
        <name>Mg(2+)</name>
        <dbReference type="ChEBI" id="CHEBI:18420"/>
    </cofactor>
</comment>
<comment type="subcellular location">
    <subcellularLocation>
        <location evidence="1">Cytoplasm</location>
    </subcellularLocation>
</comment>
<comment type="similarity">
    <text evidence="1">Belongs to the P-Pant transferase superfamily. AcpS family.</text>
</comment>
<gene>
    <name evidence="1" type="primary">acpS</name>
    <name type="ordered locus">ECH_0741</name>
</gene>